<organism>
    <name type="scientific">Limosilactobacillus reuteri subsp. reuteri (strain JCM 1112)</name>
    <name type="common">Lactobacillus reuteri</name>
    <dbReference type="NCBI Taxonomy" id="557433"/>
    <lineage>
        <taxon>Bacteria</taxon>
        <taxon>Bacillati</taxon>
        <taxon>Bacillota</taxon>
        <taxon>Bacilli</taxon>
        <taxon>Lactobacillales</taxon>
        <taxon>Lactobacillaceae</taxon>
        <taxon>Limosilactobacillus</taxon>
    </lineage>
</organism>
<sequence length="500" mass="55389">MSEQQYIMAIDQGTTSSRAIIFDHDGNKVAISQQEFPQYFPQPGWVEHDPLEIWDSVQSVISNVMIKSQIKPYKIAAIGITNQRETTVIWDRHTGKPIYNAIVWQSKQTSDIAEQLIKDGYKDMIHQKTGLVIDSYFAATKIKWILDHVPGAREKAAKGDLMFGTIDTWLLWNLSGRRVHATDVTNASRTMLFNIHTLDWDQDILDLLDIPQSLLPVVKPSSAIYGYTGDYHFYGVQIPIAGIAGDQQAALFGQAAYDKGSIKNTYGTGAFIVMNTGLKPTLSDNGLLTTIAYGLDGQTHYALEGSIFVAGSAVQWLRDGLKMFDKASESEQMAVDAKTTGGVYVVPAFTGLGAPYWDQEVRGAMFGLTRGTERGHIIRATLEAIAYQTKDVVDTMVKDTQLPLTALTVNGGASRNNFMMQFQADILQTPIKRAAMEETTALGAAFLAGLAVDFWEDQDELRKLSRIGDQFDPQMDPQKAADLYRGWQRAIAAAQFYGKD</sequence>
<feature type="chain" id="PRO_1000098738" description="Glycerol kinase">
    <location>
        <begin position="1"/>
        <end position="500"/>
    </location>
</feature>
<feature type="binding site" evidence="1">
    <location>
        <position position="14"/>
    </location>
    <ligand>
        <name>ADP</name>
        <dbReference type="ChEBI" id="CHEBI:456216"/>
    </ligand>
</feature>
<feature type="binding site" evidence="1">
    <location>
        <position position="14"/>
    </location>
    <ligand>
        <name>ATP</name>
        <dbReference type="ChEBI" id="CHEBI:30616"/>
    </ligand>
</feature>
<feature type="binding site" evidence="1">
    <location>
        <position position="14"/>
    </location>
    <ligand>
        <name>sn-glycerol 3-phosphate</name>
        <dbReference type="ChEBI" id="CHEBI:57597"/>
    </ligand>
</feature>
<feature type="binding site" evidence="1">
    <location>
        <position position="15"/>
    </location>
    <ligand>
        <name>ATP</name>
        <dbReference type="ChEBI" id="CHEBI:30616"/>
    </ligand>
</feature>
<feature type="binding site" evidence="1">
    <location>
        <position position="16"/>
    </location>
    <ligand>
        <name>ATP</name>
        <dbReference type="ChEBI" id="CHEBI:30616"/>
    </ligand>
</feature>
<feature type="binding site" evidence="1">
    <location>
        <position position="18"/>
    </location>
    <ligand>
        <name>ADP</name>
        <dbReference type="ChEBI" id="CHEBI:456216"/>
    </ligand>
</feature>
<feature type="binding site" evidence="1">
    <location>
        <position position="84"/>
    </location>
    <ligand>
        <name>glycerol</name>
        <dbReference type="ChEBI" id="CHEBI:17754"/>
    </ligand>
</feature>
<feature type="binding site" evidence="1">
    <location>
        <position position="84"/>
    </location>
    <ligand>
        <name>sn-glycerol 3-phosphate</name>
        <dbReference type="ChEBI" id="CHEBI:57597"/>
    </ligand>
</feature>
<feature type="binding site" evidence="1">
    <location>
        <position position="85"/>
    </location>
    <ligand>
        <name>glycerol</name>
        <dbReference type="ChEBI" id="CHEBI:17754"/>
    </ligand>
</feature>
<feature type="binding site" evidence="1">
    <location>
        <position position="85"/>
    </location>
    <ligand>
        <name>sn-glycerol 3-phosphate</name>
        <dbReference type="ChEBI" id="CHEBI:57597"/>
    </ligand>
</feature>
<feature type="binding site" evidence="1">
    <location>
        <position position="136"/>
    </location>
    <ligand>
        <name>glycerol</name>
        <dbReference type="ChEBI" id="CHEBI:17754"/>
    </ligand>
</feature>
<feature type="binding site" evidence="1">
    <location>
        <position position="136"/>
    </location>
    <ligand>
        <name>sn-glycerol 3-phosphate</name>
        <dbReference type="ChEBI" id="CHEBI:57597"/>
    </ligand>
</feature>
<feature type="binding site" evidence="1">
    <location>
        <position position="246"/>
    </location>
    <ligand>
        <name>glycerol</name>
        <dbReference type="ChEBI" id="CHEBI:17754"/>
    </ligand>
</feature>
<feature type="binding site" evidence="1">
    <location>
        <position position="246"/>
    </location>
    <ligand>
        <name>sn-glycerol 3-phosphate</name>
        <dbReference type="ChEBI" id="CHEBI:57597"/>
    </ligand>
</feature>
<feature type="binding site" evidence="1">
    <location>
        <position position="247"/>
    </location>
    <ligand>
        <name>glycerol</name>
        <dbReference type="ChEBI" id="CHEBI:17754"/>
    </ligand>
</feature>
<feature type="binding site" evidence="1">
    <location>
        <position position="268"/>
    </location>
    <ligand>
        <name>ADP</name>
        <dbReference type="ChEBI" id="CHEBI:456216"/>
    </ligand>
</feature>
<feature type="binding site" evidence="1">
    <location>
        <position position="268"/>
    </location>
    <ligand>
        <name>ATP</name>
        <dbReference type="ChEBI" id="CHEBI:30616"/>
    </ligand>
</feature>
<feature type="binding site" evidence="1">
    <location>
        <position position="311"/>
    </location>
    <ligand>
        <name>ADP</name>
        <dbReference type="ChEBI" id="CHEBI:456216"/>
    </ligand>
</feature>
<feature type="binding site" evidence="1">
    <location>
        <position position="311"/>
    </location>
    <ligand>
        <name>ATP</name>
        <dbReference type="ChEBI" id="CHEBI:30616"/>
    </ligand>
</feature>
<feature type="binding site" evidence="1">
    <location>
        <position position="315"/>
    </location>
    <ligand>
        <name>ATP</name>
        <dbReference type="ChEBI" id="CHEBI:30616"/>
    </ligand>
</feature>
<feature type="binding site" evidence="1">
    <location>
        <position position="412"/>
    </location>
    <ligand>
        <name>ADP</name>
        <dbReference type="ChEBI" id="CHEBI:456216"/>
    </ligand>
</feature>
<feature type="binding site" evidence="1">
    <location>
        <position position="412"/>
    </location>
    <ligand>
        <name>ATP</name>
        <dbReference type="ChEBI" id="CHEBI:30616"/>
    </ligand>
</feature>
<feature type="binding site" evidence="1">
    <location>
        <position position="416"/>
    </location>
    <ligand>
        <name>ADP</name>
        <dbReference type="ChEBI" id="CHEBI:456216"/>
    </ligand>
</feature>
<feature type="modified residue" description="Phosphohistidine; by HPr" evidence="1">
    <location>
        <position position="232"/>
    </location>
</feature>
<reference key="1">
    <citation type="journal article" date="2008" name="DNA Res.">
        <title>Comparative genome analysis of Lactobacillus reuteri and Lactobacillus fermentum reveal a genomic island for reuterin and cobalamin production.</title>
        <authorList>
            <person name="Morita H."/>
            <person name="Toh H."/>
            <person name="Fukuda S."/>
            <person name="Horikawa H."/>
            <person name="Oshima K."/>
            <person name="Suzuki T."/>
            <person name="Murakami M."/>
            <person name="Hisamatsu S."/>
            <person name="Kato Y."/>
            <person name="Takizawa T."/>
            <person name="Fukuoka H."/>
            <person name="Yoshimura T."/>
            <person name="Itoh K."/>
            <person name="O'Sullivan D.J."/>
            <person name="McKay L.L."/>
            <person name="Ohno H."/>
            <person name="Kikuchi J."/>
            <person name="Masaoka T."/>
            <person name="Hattori M."/>
        </authorList>
    </citation>
    <scope>NUCLEOTIDE SEQUENCE [LARGE SCALE GENOMIC DNA]</scope>
    <source>
        <strain>JCM 1112</strain>
    </source>
</reference>
<proteinExistence type="inferred from homology"/>
<keyword id="KW-0067">ATP-binding</keyword>
<keyword id="KW-0319">Glycerol metabolism</keyword>
<keyword id="KW-0418">Kinase</keyword>
<keyword id="KW-0547">Nucleotide-binding</keyword>
<keyword id="KW-0597">Phosphoprotein</keyword>
<keyword id="KW-0808">Transferase</keyword>
<accession>B2G7U6</accession>
<comment type="function">
    <text evidence="1">Key enzyme in the regulation of glycerol uptake and metabolism. Catalyzes the phosphorylation of glycerol to yield sn-glycerol 3-phosphate.</text>
</comment>
<comment type="catalytic activity">
    <reaction evidence="1">
        <text>glycerol + ATP = sn-glycerol 3-phosphate + ADP + H(+)</text>
        <dbReference type="Rhea" id="RHEA:21644"/>
        <dbReference type="ChEBI" id="CHEBI:15378"/>
        <dbReference type="ChEBI" id="CHEBI:17754"/>
        <dbReference type="ChEBI" id="CHEBI:30616"/>
        <dbReference type="ChEBI" id="CHEBI:57597"/>
        <dbReference type="ChEBI" id="CHEBI:456216"/>
        <dbReference type="EC" id="2.7.1.30"/>
    </reaction>
</comment>
<comment type="activity regulation">
    <text evidence="1">Activated by phosphorylation and inhibited by fructose 1,6-bisphosphate (FBP).</text>
</comment>
<comment type="pathway">
    <text evidence="1">Polyol metabolism; glycerol degradation via glycerol kinase pathway; sn-glycerol 3-phosphate from glycerol: step 1/1.</text>
</comment>
<comment type="subunit">
    <text evidence="1">Homotetramer and homodimer (in equilibrium).</text>
</comment>
<comment type="PTM">
    <text evidence="1">The phosphoenolpyruvate-dependent sugar phosphotransferase system (PTS), including enzyme I, and histidine-containing protein (HPr) are required for the phosphorylation, which leads to the activation of the enzyme.</text>
</comment>
<comment type="similarity">
    <text evidence="1">Belongs to the FGGY kinase family.</text>
</comment>
<name>GLPK_LIMRJ</name>
<protein>
    <recommendedName>
        <fullName evidence="1">Glycerol kinase</fullName>
        <ecNumber evidence="1">2.7.1.30</ecNumber>
    </recommendedName>
    <alternativeName>
        <fullName evidence="1">ATP:glycerol 3-phosphotransferase</fullName>
    </alternativeName>
    <alternativeName>
        <fullName evidence="1">Glycerokinase</fullName>
        <shortName evidence="1">GK</shortName>
    </alternativeName>
</protein>
<gene>
    <name evidence="1" type="primary">glpK</name>
    <name type="ordered locus">LAR_1012</name>
</gene>
<evidence type="ECO:0000255" key="1">
    <source>
        <dbReference type="HAMAP-Rule" id="MF_00186"/>
    </source>
</evidence>
<dbReference type="EC" id="2.7.1.30" evidence="1"/>
<dbReference type="EMBL" id="AP007281">
    <property type="protein sequence ID" value="BAG25528.1"/>
    <property type="molecule type" value="Genomic_DNA"/>
</dbReference>
<dbReference type="RefSeq" id="WP_003667028.1">
    <property type="nucleotide sequence ID" value="NC_010609.1"/>
</dbReference>
<dbReference type="SMR" id="B2G7U6"/>
<dbReference type="KEGG" id="lrf:LAR_1012"/>
<dbReference type="HOGENOM" id="CLU_009281_2_3_9"/>
<dbReference type="UniPathway" id="UPA00618">
    <property type="reaction ID" value="UER00672"/>
</dbReference>
<dbReference type="GO" id="GO:0005829">
    <property type="term" value="C:cytosol"/>
    <property type="evidence" value="ECO:0007669"/>
    <property type="project" value="TreeGrafter"/>
</dbReference>
<dbReference type="GO" id="GO:0005524">
    <property type="term" value="F:ATP binding"/>
    <property type="evidence" value="ECO:0007669"/>
    <property type="project" value="UniProtKB-UniRule"/>
</dbReference>
<dbReference type="GO" id="GO:0004370">
    <property type="term" value="F:glycerol kinase activity"/>
    <property type="evidence" value="ECO:0000250"/>
    <property type="project" value="UniProtKB"/>
</dbReference>
<dbReference type="GO" id="GO:0019563">
    <property type="term" value="P:glycerol catabolic process"/>
    <property type="evidence" value="ECO:0007669"/>
    <property type="project" value="UniProtKB-UniRule"/>
</dbReference>
<dbReference type="GO" id="GO:0006071">
    <property type="term" value="P:glycerol metabolic process"/>
    <property type="evidence" value="ECO:0000250"/>
    <property type="project" value="UniProtKB"/>
</dbReference>
<dbReference type="GO" id="GO:0006072">
    <property type="term" value="P:glycerol-3-phosphate metabolic process"/>
    <property type="evidence" value="ECO:0007669"/>
    <property type="project" value="InterPro"/>
</dbReference>
<dbReference type="CDD" id="cd07769">
    <property type="entry name" value="ASKHA_NBD_FGGY_GK"/>
    <property type="match status" value="1"/>
</dbReference>
<dbReference type="FunFam" id="3.30.420.40:FF:000007">
    <property type="entry name" value="Glycerol kinase"/>
    <property type="match status" value="1"/>
</dbReference>
<dbReference type="FunFam" id="3.30.420.40:FF:000008">
    <property type="entry name" value="Glycerol kinase"/>
    <property type="match status" value="1"/>
</dbReference>
<dbReference type="Gene3D" id="3.30.420.40">
    <property type="match status" value="2"/>
</dbReference>
<dbReference type="HAMAP" id="MF_00186">
    <property type="entry name" value="Glycerol_kin"/>
    <property type="match status" value="1"/>
</dbReference>
<dbReference type="InterPro" id="IPR043129">
    <property type="entry name" value="ATPase_NBD"/>
</dbReference>
<dbReference type="InterPro" id="IPR000577">
    <property type="entry name" value="Carb_kinase_FGGY"/>
</dbReference>
<dbReference type="InterPro" id="IPR018483">
    <property type="entry name" value="Carb_kinase_FGGY_CS"/>
</dbReference>
<dbReference type="InterPro" id="IPR018485">
    <property type="entry name" value="FGGY_C"/>
</dbReference>
<dbReference type="InterPro" id="IPR018484">
    <property type="entry name" value="FGGY_N"/>
</dbReference>
<dbReference type="InterPro" id="IPR005999">
    <property type="entry name" value="Glycerol_kin"/>
</dbReference>
<dbReference type="NCBIfam" id="TIGR01311">
    <property type="entry name" value="glycerol_kin"/>
    <property type="match status" value="1"/>
</dbReference>
<dbReference type="NCBIfam" id="NF000756">
    <property type="entry name" value="PRK00047.1"/>
    <property type="match status" value="1"/>
</dbReference>
<dbReference type="PANTHER" id="PTHR10196:SF69">
    <property type="entry name" value="GLYCEROL KINASE"/>
    <property type="match status" value="1"/>
</dbReference>
<dbReference type="PANTHER" id="PTHR10196">
    <property type="entry name" value="SUGAR KINASE"/>
    <property type="match status" value="1"/>
</dbReference>
<dbReference type="Pfam" id="PF02782">
    <property type="entry name" value="FGGY_C"/>
    <property type="match status" value="1"/>
</dbReference>
<dbReference type="Pfam" id="PF00370">
    <property type="entry name" value="FGGY_N"/>
    <property type="match status" value="1"/>
</dbReference>
<dbReference type="PIRSF" id="PIRSF000538">
    <property type="entry name" value="GlpK"/>
    <property type="match status" value="1"/>
</dbReference>
<dbReference type="SUPFAM" id="SSF53067">
    <property type="entry name" value="Actin-like ATPase domain"/>
    <property type="match status" value="2"/>
</dbReference>
<dbReference type="PROSITE" id="PS00445">
    <property type="entry name" value="FGGY_KINASES_2"/>
    <property type="match status" value="1"/>
</dbReference>